<reference key="1">
    <citation type="submission" date="2007-10" db="EMBL/GenBank/DDBJ databases">
        <title>Complete sequence of chromosome 1 of Burkholderia multivorans ATCC 17616.</title>
        <authorList>
            <person name="Copeland A."/>
            <person name="Lucas S."/>
            <person name="Lapidus A."/>
            <person name="Barry K."/>
            <person name="Glavina del Rio T."/>
            <person name="Dalin E."/>
            <person name="Tice H."/>
            <person name="Pitluck S."/>
            <person name="Chain P."/>
            <person name="Malfatti S."/>
            <person name="Shin M."/>
            <person name="Vergez L."/>
            <person name="Schmutz J."/>
            <person name="Larimer F."/>
            <person name="Land M."/>
            <person name="Hauser L."/>
            <person name="Kyrpides N."/>
            <person name="Kim E."/>
            <person name="Tiedje J."/>
            <person name="Richardson P."/>
        </authorList>
    </citation>
    <scope>NUCLEOTIDE SEQUENCE [LARGE SCALE GENOMIC DNA]</scope>
    <source>
        <strain>ATCC 17616 / 249</strain>
    </source>
</reference>
<reference key="2">
    <citation type="submission" date="2007-04" db="EMBL/GenBank/DDBJ databases">
        <title>Complete genome sequence of Burkholderia multivorans ATCC 17616.</title>
        <authorList>
            <person name="Ohtsubo Y."/>
            <person name="Yamashita A."/>
            <person name="Kurokawa K."/>
            <person name="Takami H."/>
            <person name="Yuhara S."/>
            <person name="Nishiyama E."/>
            <person name="Endo R."/>
            <person name="Miyazaki R."/>
            <person name="Ono A."/>
            <person name="Yano K."/>
            <person name="Ito M."/>
            <person name="Sota M."/>
            <person name="Yuji N."/>
            <person name="Hattori M."/>
            <person name="Tsuda M."/>
        </authorList>
    </citation>
    <scope>NUCLEOTIDE SEQUENCE [LARGE SCALE GENOMIC DNA]</scope>
    <source>
        <strain>ATCC 17616 / 249</strain>
    </source>
</reference>
<evidence type="ECO:0000255" key="1">
    <source>
        <dbReference type="HAMAP-Rule" id="MF_00161"/>
    </source>
</evidence>
<comment type="function">
    <text evidence="1">This protein specifically catalyzes the removal of signal peptides from prolipoproteins.</text>
</comment>
<comment type="catalytic activity">
    <reaction evidence="1">
        <text>Release of signal peptides from bacterial membrane prolipoproteins. Hydrolyzes -Xaa-Yaa-Zaa-|-(S,diacylglyceryl)Cys-, in which Xaa is hydrophobic (preferably Leu), and Yaa (Ala or Ser) and Zaa (Gly or Ala) have small, neutral side chains.</text>
        <dbReference type="EC" id="3.4.23.36"/>
    </reaction>
</comment>
<comment type="pathway">
    <text evidence="1">Protein modification; lipoprotein biosynthesis (signal peptide cleavage).</text>
</comment>
<comment type="subcellular location">
    <subcellularLocation>
        <location evidence="1">Cell inner membrane</location>
        <topology evidence="1">Multi-pass membrane protein</topology>
    </subcellularLocation>
</comment>
<comment type="similarity">
    <text evidence="1">Belongs to the peptidase A8 family.</text>
</comment>
<gene>
    <name evidence="1" type="primary">lspA</name>
    <name type="ordered locus">Bmul_0782</name>
    <name type="ordered locus">BMULJ_02478</name>
</gene>
<accession>A9AGN5</accession>
<keyword id="KW-0064">Aspartyl protease</keyword>
<keyword id="KW-0997">Cell inner membrane</keyword>
<keyword id="KW-1003">Cell membrane</keyword>
<keyword id="KW-0378">Hydrolase</keyword>
<keyword id="KW-0472">Membrane</keyword>
<keyword id="KW-0645">Protease</keyword>
<keyword id="KW-1185">Reference proteome</keyword>
<keyword id="KW-0812">Transmembrane</keyword>
<keyword id="KW-1133">Transmembrane helix</keyword>
<sequence length="166" mass="18071">MAKTLSKPASGALAPWLGISLIVILFDQLSKIAILKTFAYGAQHALTSFFNLVLVYNRGAAFGFLSTASGWQRWAFTALGVGATLVICFLLKRHGHQRLFSLSLALILGGALGNVIDRLVYGHVIDFLDFHLGGWHFPAFNLADSAITIGAVLLIYDELRRVRGAR</sequence>
<proteinExistence type="inferred from homology"/>
<feature type="chain" id="PRO_1000097238" description="Lipoprotein signal peptidase">
    <location>
        <begin position="1"/>
        <end position="166"/>
    </location>
</feature>
<feature type="transmembrane region" description="Helical" evidence="1">
    <location>
        <begin position="9"/>
        <end position="29"/>
    </location>
</feature>
<feature type="transmembrane region" description="Helical" evidence="1">
    <location>
        <begin position="45"/>
        <end position="65"/>
    </location>
</feature>
<feature type="transmembrane region" description="Helical" evidence="1">
    <location>
        <begin position="71"/>
        <end position="91"/>
    </location>
</feature>
<feature type="transmembrane region" description="Helical" evidence="1">
    <location>
        <begin position="100"/>
        <end position="120"/>
    </location>
</feature>
<feature type="transmembrane region" description="Helical" evidence="1">
    <location>
        <begin position="135"/>
        <end position="155"/>
    </location>
</feature>
<feature type="active site" evidence="1">
    <location>
        <position position="126"/>
    </location>
</feature>
<feature type="active site" evidence="1">
    <location>
        <position position="144"/>
    </location>
</feature>
<dbReference type="EC" id="3.4.23.36" evidence="1"/>
<dbReference type="EMBL" id="CP000868">
    <property type="protein sequence ID" value="ABX14477.1"/>
    <property type="molecule type" value="Genomic_DNA"/>
</dbReference>
<dbReference type="EMBL" id="AP009385">
    <property type="protein sequence ID" value="BAG44369.1"/>
    <property type="molecule type" value="Genomic_DNA"/>
</dbReference>
<dbReference type="RefSeq" id="WP_006398534.1">
    <property type="nucleotide sequence ID" value="NC_010804.1"/>
</dbReference>
<dbReference type="SMR" id="A9AGN5"/>
<dbReference type="STRING" id="395019.BMULJ_02478"/>
<dbReference type="GeneID" id="89571059"/>
<dbReference type="KEGG" id="bmj:BMULJ_02478"/>
<dbReference type="KEGG" id="bmu:Bmul_0782"/>
<dbReference type="eggNOG" id="COG0597">
    <property type="taxonomic scope" value="Bacteria"/>
</dbReference>
<dbReference type="HOGENOM" id="CLU_083252_4_0_4"/>
<dbReference type="UniPathway" id="UPA00665"/>
<dbReference type="Proteomes" id="UP000008815">
    <property type="component" value="Chromosome 1"/>
</dbReference>
<dbReference type="GO" id="GO:0005886">
    <property type="term" value="C:plasma membrane"/>
    <property type="evidence" value="ECO:0007669"/>
    <property type="project" value="UniProtKB-SubCell"/>
</dbReference>
<dbReference type="GO" id="GO:0004190">
    <property type="term" value="F:aspartic-type endopeptidase activity"/>
    <property type="evidence" value="ECO:0007669"/>
    <property type="project" value="UniProtKB-UniRule"/>
</dbReference>
<dbReference type="GO" id="GO:0006508">
    <property type="term" value="P:proteolysis"/>
    <property type="evidence" value="ECO:0007669"/>
    <property type="project" value="UniProtKB-KW"/>
</dbReference>
<dbReference type="HAMAP" id="MF_00161">
    <property type="entry name" value="LspA"/>
    <property type="match status" value="1"/>
</dbReference>
<dbReference type="InterPro" id="IPR001872">
    <property type="entry name" value="Peptidase_A8"/>
</dbReference>
<dbReference type="NCBIfam" id="TIGR00077">
    <property type="entry name" value="lspA"/>
    <property type="match status" value="1"/>
</dbReference>
<dbReference type="PANTHER" id="PTHR33695">
    <property type="entry name" value="LIPOPROTEIN SIGNAL PEPTIDASE"/>
    <property type="match status" value="1"/>
</dbReference>
<dbReference type="PANTHER" id="PTHR33695:SF1">
    <property type="entry name" value="LIPOPROTEIN SIGNAL PEPTIDASE"/>
    <property type="match status" value="1"/>
</dbReference>
<dbReference type="Pfam" id="PF01252">
    <property type="entry name" value="Peptidase_A8"/>
    <property type="match status" value="1"/>
</dbReference>
<dbReference type="PRINTS" id="PR00781">
    <property type="entry name" value="LIPOSIGPTASE"/>
</dbReference>
<dbReference type="PROSITE" id="PS00855">
    <property type="entry name" value="SPASE_II"/>
    <property type="match status" value="1"/>
</dbReference>
<name>LSPA_BURM1</name>
<protein>
    <recommendedName>
        <fullName evidence="1">Lipoprotein signal peptidase</fullName>
        <ecNumber evidence="1">3.4.23.36</ecNumber>
    </recommendedName>
    <alternativeName>
        <fullName evidence="1">Prolipoprotein signal peptidase</fullName>
    </alternativeName>
    <alternativeName>
        <fullName evidence="1">Signal peptidase II</fullName>
        <shortName evidence="1">SPase II</shortName>
    </alternativeName>
</protein>
<organism>
    <name type="scientific">Burkholderia multivorans (strain ATCC 17616 / 249)</name>
    <dbReference type="NCBI Taxonomy" id="395019"/>
    <lineage>
        <taxon>Bacteria</taxon>
        <taxon>Pseudomonadati</taxon>
        <taxon>Pseudomonadota</taxon>
        <taxon>Betaproteobacteria</taxon>
        <taxon>Burkholderiales</taxon>
        <taxon>Burkholderiaceae</taxon>
        <taxon>Burkholderia</taxon>
        <taxon>Burkholderia cepacia complex</taxon>
    </lineage>
</organism>